<evidence type="ECO:0000255" key="1">
    <source>
        <dbReference type="HAMAP-Rule" id="MF_01395"/>
    </source>
</evidence>
<evidence type="ECO:0000255" key="2">
    <source>
        <dbReference type="PROSITE-ProRule" id="PRU01136"/>
    </source>
</evidence>
<evidence type="ECO:0000256" key="3">
    <source>
        <dbReference type="SAM" id="MobiDB-lite"/>
    </source>
</evidence>
<comment type="function">
    <text evidence="1">Component of the acetyl coenzyme A carboxylase (ACC) complex. Biotin carboxylase (BC) catalyzes the carboxylation of biotin on its carrier protein (BCCP) and then the CO(2) group is transferred by the transcarboxylase to acetyl-CoA to form malonyl-CoA.</text>
</comment>
<comment type="catalytic activity">
    <reaction evidence="1">
        <text>N(6)-carboxybiotinyl-L-lysyl-[protein] + acetyl-CoA = N(6)-biotinyl-L-lysyl-[protein] + malonyl-CoA</text>
        <dbReference type="Rhea" id="RHEA:54728"/>
        <dbReference type="Rhea" id="RHEA-COMP:10505"/>
        <dbReference type="Rhea" id="RHEA-COMP:10506"/>
        <dbReference type="ChEBI" id="CHEBI:57288"/>
        <dbReference type="ChEBI" id="CHEBI:57384"/>
        <dbReference type="ChEBI" id="CHEBI:83144"/>
        <dbReference type="ChEBI" id="CHEBI:83145"/>
        <dbReference type="EC" id="2.1.3.15"/>
    </reaction>
</comment>
<comment type="cofactor">
    <cofactor evidence="1">
        <name>Zn(2+)</name>
        <dbReference type="ChEBI" id="CHEBI:29105"/>
    </cofactor>
    <text evidence="1">Binds 1 zinc ion per subunit.</text>
</comment>
<comment type="pathway">
    <text evidence="1">Lipid metabolism; malonyl-CoA biosynthesis; malonyl-CoA from acetyl-CoA: step 1/1.</text>
</comment>
<comment type="subunit">
    <text evidence="1">Acetyl-CoA carboxylase is a heterohexamer composed of biotin carboxyl carrier protein (AccB), biotin carboxylase (AccC) and two subunits each of ACCase subunit alpha (AccA) and ACCase subunit beta (AccD).</text>
</comment>
<comment type="subcellular location">
    <subcellularLocation>
        <location evidence="1">Cytoplasm</location>
    </subcellularLocation>
</comment>
<comment type="similarity">
    <text evidence="1">Belongs to the AccD/PCCB family.</text>
</comment>
<accession>B0VRF9</accession>
<protein>
    <recommendedName>
        <fullName evidence="1">Acetyl-coenzyme A carboxylase carboxyl transferase subunit beta</fullName>
        <shortName evidence="1">ACCase subunit beta</shortName>
        <shortName evidence="1">Acetyl-CoA carboxylase carboxyltransferase subunit beta</shortName>
        <ecNumber evidence="1">2.1.3.15</ecNumber>
    </recommendedName>
</protein>
<gene>
    <name evidence="1" type="primary">accD</name>
    <name type="ordered locus">ABSDF0574</name>
</gene>
<organism>
    <name type="scientific">Acinetobacter baumannii (strain SDF)</name>
    <dbReference type="NCBI Taxonomy" id="509170"/>
    <lineage>
        <taxon>Bacteria</taxon>
        <taxon>Pseudomonadati</taxon>
        <taxon>Pseudomonadota</taxon>
        <taxon>Gammaproteobacteria</taxon>
        <taxon>Moraxellales</taxon>
        <taxon>Moraxellaceae</taxon>
        <taxon>Acinetobacter</taxon>
        <taxon>Acinetobacter calcoaceticus/baumannii complex</taxon>
    </lineage>
</organism>
<dbReference type="EC" id="2.1.3.15" evidence="1"/>
<dbReference type="EMBL" id="CU468230">
    <property type="protein sequence ID" value="CAO99953.1"/>
    <property type="molecule type" value="Genomic_DNA"/>
</dbReference>
<dbReference type="SMR" id="B0VRF9"/>
<dbReference type="KEGG" id="abm:ABSDF0574"/>
<dbReference type="HOGENOM" id="CLU_015486_1_0_6"/>
<dbReference type="UniPathway" id="UPA00655">
    <property type="reaction ID" value="UER00711"/>
</dbReference>
<dbReference type="Proteomes" id="UP000001741">
    <property type="component" value="Chromosome"/>
</dbReference>
<dbReference type="GO" id="GO:0009329">
    <property type="term" value="C:acetate CoA-transferase complex"/>
    <property type="evidence" value="ECO:0007669"/>
    <property type="project" value="TreeGrafter"/>
</dbReference>
<dbReference type="GO" id="GO:0003989">
    <property type="term" value="F:acetyl-CoA carboxylase activity"/>
    <property type="evidence" value="ECO:0007669"/>
    <property type="project" value="InterPro"/>
</dbReference>
<dbReference type="GO" id="GO:0005524">
    <property type="term" value="F:ATP binding"/>
    <property type="evidence" value="ECO:0007669"/>
    <property type="project" value="UniProtKB-KW"/>
</dbReference>
<dbReference type="GO" id="GO:0016743">
    <property type="term" value="F:carboxyl- or carbamoyltransferase activity"/>
    <property type="evidence" value="ECO:0007669"/>
    <property type="project" value="UniProtKB-UniRule"/>
</dbReference>
<dbReference type="GO" id="GO:0008270">
    <property type="term" value="F:zinc ion binding"/>
    <property type="evidence" value="ECO:0007669"/>
    <property type="project" value="UniProtKB-UniRule"/>
</dbReference>
<dbReference type="GO" id="GO:0006633">
    <property type="term" value="P:fatty acid biosynthetic process"/>
    <property type="evidence" value="ECO:0007669"/>
    <property type="project" value="UniProtKB-KW"/>
</dbReference>
<dbReference type="GO" id="GO:2001295">
    <property type="term" value="P:malonyl-CoA biosynthetic process"/>
    <property type="evidence" value="ECO:0007669"/>
    <property type="project" value="UniProtKB-UniRule"/>
</dbReference>
<dbReference type="Gene3D" id="3.90.226.10">
    <property type="entry name" value="2-enoyl-CoA Hydratase, Chain A, domain 1"/>
    <property type="match status" value="1"/>
</dbReference>
<dbReference type="HAMAP" id="MF_01395">
    <property type="entry name" value="AcetylCoA_CT_beta"/>
    <property type="match status" value="1"/>
</dbReference>
<dbReference type="InterPro" id="IPR034733">
    <property type="entry name" value="AcCoA_carboxyl_beta"/>
</dbReference>
<dbReference type="InterPro" id="IPR000438">
    <property type="entry name" value="Acetyl_CoA_COase_Trfase_b_su"/>
</dbReference>
<dbReference type="InterPro" id="IPR029045">
    <property type="entry name" value="ClpP/crotonase-like_dom_sf"/>
</dbReference>
<dbReference type="InterPro" id="IPR011762">
    <property type="entry name" value="COA_CT_N"/>
</dbReference>
<dbReference type="NCBIfam" id="TIGR00515">
    <property type="entry name" value="accD"/>
    <property type="match status" value="1"/>
</dbReference>
<dbReference type="PANTHER" id="PTHR42995">
    <property type="entry name" value="ACETYL-COENZYME A CARBOXYLASE CARBOXYL TRANSFERASE SUBUNIT BETA, CHLOROPLASTIC"/>
    <property type="match status" value="1"/>
</dbReference>
<dbReference type="PANTHER" id="PTHR42995:SF5">
    <property type="entry name" value="ACETYL-COENZYME A CARBOXYLASE CARBOXYL TRANSFERASE SUBUNIT BETA, CHLOROPLASTIC"/>
    <property type="match status" value="1"/>
</dbReference>
<dbReference type="Pfam" id="PF01039">
    <property type="entry name" value="Carboxyl_trans"/>
    <property type="match status" value="1"/>
</dbReference>
<dbReference type="PRINTS" id="PR01070">
    <property type="entry name" value="ACCCTRFRASEB"/>
</dbReference>
<dbReference type="SUPFAM" id="SSF52096">
    <property type="entry name" value="ClpP/crotonase"/>
    <property type="match status" value="1"/>
</dbReference>
<dbReference type="PROSITE" id="PS50980">
    <property type="entry name" value="COA_CT_NTER"/>
    <property type="match status" value="1"/>
</dbReference>
<sequence length="298" mass="33016">MNQEVKSGKVLSPSTPWTQRPVPGIEVADEQQTLKATFTEPTIECPECHALVTRTAISFNAYVCPQCDEHLRMKARDRLNWFFDNVVAELGQEFSAKDPLKFVDSKPYPDRMREAQTKTGETEALIAMQGNLNGVDMIACAFEFDFMAGSMGTVVGDRFVKAAELAIEKRQPLICFAASGGARMQEGMLSLMQMARTSAAIQKLKDTGLPYIVVLTHPVYGGVTASLAMLGDIHIAEPKAMIGFAGKRVIEQTVRETLEEPFQRAEYLLDHGVVDQIVHRHALRDTVSRLVSKLMNLP</sequence>
<keyword id="KW-0067">ATP-binding</keyword>
<keyword id="KW-0963">Cytoplasm</keyword>
<keyword id="KW-0275">Fatty acid biosynthesis</keyword>
<keyword id="KW-0276">Fatty acid metabolism</keyword>
<keyword id="KW-0444">Lipid biosynthesis</keyword>
<keyword id="KW-0443">Lipid metabolism</keyword>
<keyword id="KW-0479">Metal-binding</keyword>
<keyword id="KW-0547">Nucleotide-binding</keyword>
<keyword id="KW-0808">Transferase</keyword>
<keyword id="KW-0862">Zinc</keyword>
<keyword id="KW-0863">Zinc-finger</keyword>
<feature type="chain" id="PRO_0000389659" description="Acetyl-coenzyme A carboxylase carboxyl transferase subunit beta">
    <location>
        <begin position="1"/>
        <end position="298"/>
    </location>
</feature>
<feature type="domain" description="CoA carboxyltransferase N-terminal" evidence="2">
    <location>
        <begin position="41"/>
        <end position="298"/>
    </location>
</feature>
<feature type="zinc finger region" description="C4-type" evidence="1">
    <location>
        <begin position="20"/>
        <end position="67"/>
    </location>
</feature>
<feature type="region of interest" description="Disordered" evidence="3">
    <location>
        <begin position="1"/>
        <end position="21"/>
    </location>
</feature>
<feature type="binding site" evidence="1">
    <location>
        <position position="45"/>
    </location>
    <ligand>
        <name>Zn(2+)</name>
        <dbReference type="ChEBI" id="CHEBI:29105"/>
    </ligand>
</feature>
<feature type="binding site" evidence="1">
    <location>
        <position position="48"/>
    </location>
    <ligand>
        <name>Zn(2+)</name>
        <dbReference type="ChEBI" id="CHEBI:29105"/>
    </ligand>
</feature>
<feature type="binding site" evidence="1">
    <location>
        <position position="64"/>
    </location>
    <ligand>
        <name>Zn(2+)</name>
        <dbReference type="ChEBI" id="CHEBI:29105"/>
    </ligand>
</feature>
<feature type="binding site" evidence="1">
    <location>
        <position position="67"/>
    </location>
    <ligand>
        <name>Zn(2+)</name>
        <dbReference type="ChEBI" id="CHEBI:29105"/>
    </ligand>
</feature>
<proteinExistence type="inferred from homology"/>
<reference key="1">
    <citation type="journal article" date="2008" name="PLoS ONE">
        <title>Comparative analysis of Acinetobacters: three genomes for three lifestyles.</title>
        <authorList>
            <person name="Vallenet D."/>
            <person name="Nordmann P."/>
            <person name="Barbe V."/>
            <person name="Poirel L."/>
            <person name="Mangenot S."/>
            <person name="Bataille E."/>
            <person name="Dossat C."/>
            <person name="Gas S."/>
            <person name="Kreimeyer A."/>
            <person name="Lenoble P."/>
            <person name="Oztas S."/>
            <person name="Poulain J."/>
            <person name="Segurens B."/>
            <person name="Robert C."/>
            <person name="Abergel C."/>
            <person name="Claverie J.-M."/>
            <person name="Raoult D."/>
            <person name="Medigue C."/>
            <person name="Weissenbach J."/>
            <person name="Cruveiller S."/>
        </authorList>
    </citation>
    <scope>NUCLEOTIDE SEQUENCE [LARGE SCALE GENOMIC DNA]</scope>
    <source>
        <strain>SDF</strain>
    </source>
</reference>
<name>ACCD_ACIBS</name>